<feature type="chain" id="PRO_0000329193" description="DNA-directed RNA polymerase subunit beta">
    <location>
        <begin position="1"/>
        <end position="1172"/>
    </location>
</feature>
<keyword id="KW-0240">DNA-directed RNA polymerase</keyword>
<keyword id="KW-0548">Nucleotidyltransferase</keyword>
<keyword id="KW-0804">Transcription</keyword>
<keyword id="KW-0808">Transferase</keyword>
<protein>
    <recommendedName>
        <fullName evidence="1">DNA-directed RNA polymerase subunit beta</fullName>
        <shortName evidence="1">RNAP subunit beta</shortName>
        <ecNumber evidence="1">2.7.7.6</ecNumber>
    </recommendedName>
    <alternativeName>
        <fullName evidence="1">RNA polymerase subunit beta</fullName>
    </alternativeName>
    <alternativeName>
        <fullName evidence="1">Transcriptase subunit beta</fullName>
    </alternativeName>
</protein>
<sequence>MKEIKRGKRTRYSFERVQTPIPVPNLVEIQTKSYQDFLENGILKVLKKFSPITSSKSDLRKEKGFSLEFVSVRIGEPQNTVQECKERLLTYTVPVYTTVRITDNSTNEMIEEEAFLGYIPYMTPRTTFIINGAERVVVNQLVRSPGIYFVEEAKKTSGTKPIYVAHFLPVRGAWLEILLNLNDEVFYARIDRKRRINLFLLLKALGYSEDLELLSLFPYWIDVEDEYTLQHSEGLIILEDVKTKNGGLIAKRGDVITQGLIEKLENSDIQKIKVAHRYAVNTLEKLNHVYGENIEENRAYIEIFRKLRPGELPRINAAKIFLRNLYFNEERFELSEVGRFKMNNRLEEAYRKYLIEVEGKDPQGVEEVKYDETSNVLTPMDIVLASRNLIEIDKHPGTMDTKDHLGNKRVRTVGELIRIEFERAFSKAVFMIQEKLATYTSLDKISVQSLINVKSIIATINSFFATNPLSQFMDQTNPLAELTHKRRLTAVGPGGLKRERARFEVRDVHHSHYGRMCPIETPEGANIGLITSLSVYSSIDKFGFLITPYVKVVKGKVTNEIVYLTADEEENYKIAPSTIPIDEKGNIIPENVTVRYEEKVLYVNKNNVQFIDVAPNQIVSVSTSLIPFLEHDDANRALMGSNMQRQGVPLIETEAPRVGTGMEWEAAKYSGTLILAKHDGIVKKVDAQKIVIHRIDENGKEMYDSMGNPMLDIYELLKFTRTNQDTCINQRPIVNVGEIVKKDEPIADGPATDMGELALGKNVLVAFVPWEGYNFEDAILISEELLEKETYTSIHIEVYETTARDTRLGPEEITPDIPNVSKEKLRNLDEDGIIRIGAYVQETDILVGKVTPKSESDTTPEEKIIRSVFGEKGKEVKDTSLRVPHGIEGRVIAVHVFDKEKDGDLGPGVNKLIRVYVAIRKPLEVGDKLAGRHGNKGVVSKILPKEDMPFLPDGTPIQVVLSPLGVPSRMNVGQILETSLGWLAMLTNRWFATPVFDGAKEGDILPELYKARKKFGLEMGDFEENPSGKVILRDGRTGKEFDHPILVGYMYVMKLIHIARDKIHARSTGPYSLIHQQPLGGKAQFGGQRFGEMEVWALEAYGAAHTLNEMLTVKSDDIRGRNEVYKAIMKGKNIPEPGLPESFKVLVRELRGIALDVRVYDDEGNEIDIEKL</sequence>
<gene>
    <name evidence="1" type="primary">rpoB</name>
    <name type="ordered locus">Tmel_0502</name>
</gene>
<reference key="1">
    <citation type="submission" date="2007-05" db="EMBL/GenBank/DDBJ databases">
        <title>Complete sequence of Thermosipho melanesiensis BI429.</title>
        <authorList>
            <consortium name="US DOE Joint Genome Institute"/>
            <person name="Copeland A."/>
            <person name="Lucas S."/>
            <person name="Lapidus A."/>
            <person name="Barry K."/>
            <person name="Glavina del Rio T."/>
            <person name="Dalin E."/>
            <person name="Tice H."/>
            <person name="Pitluck S."/>
            <person name="Chertkov O."/>
            <person name="Brettin T."/>
            <person name="Bruce D."/>
            <person name="Detter J.C."/>
            <person name="Han C."/>
            <person name="Schmutz J."/>
            <person name="Larimer F."/>
            <person name="Land M."/>
            <person name="Hauser L."/>
            <person name="Kyrpides N."/>
            <person name="Mikhailova N."/>
            <person name="Nelson K."/>
            <person name="Gogarten J.P."/>
            <person name="Noll K."/>
            <person name="Richardson P."/>
        </authorList>
    </citation>
    <scope>NUCLEOTIDE SEQUENCE [LARGE SCALE GENOMIC DNA]</scope>
    <source>
        <strain>DSM 12029 / CIP 104789 / BI429</strain>
    </source>
</reference>
<proteinExistence type="inferred from homology"/>
<accession>A6LKB8</accession>
<evidence type="ECO:0000255" key="1">
    <source>
        <dbReference type="HAMAP-Rule" id="MF_01321"/>
    </source>
</evidence>
<organism>
    <name type="scientific">Thermosipho melanesiensis (strain DSM 12029 / CIP 104789 / BI429)</name>
    <dbReference type="NCBI Taxonomy" id="391009"/>
    <lineage>
        <taxon>Bacteria</taxon>
        <taxon>Thermotogati</taxon>
        <taxon>Thermotogota</taxon>
        <taxon>Thermotogae</taxon>
        <taxon>Thermotogales</taxon>
        <taxon>Fervidobacteriaceae</taxon>
        <taxon>Thermosipho</taxon>
    </lineage>
</organism>
<comment type="function">
    <text evidence="1">DNA-dependent RNA polymerase catalyzes the transcription of DNA into RNA using the four ribonucleoside triphosphates as substrates.</text>
</comment>
<comment type="catalytic activity">
    <reaction evidence="1">
        <text>RNA(n) + a ribonucleoside 5'-triphosphate = RNA(n+1) + diphosphate</text>
        <dbReference type="Rhea" id="RHEA:21248"/>
        <dbReference type="Rhea" id="RHEA-COMP:14527"/>
        <dbReference type="Rhea" id="RHEA-COMP:17342"/>
        <dbReference type="ChEBI" id="CHEBI:33019"/>
        <dbReference type="ChEBI" id="CHEBI:61557"/>
        <dbReference type="ChEBI" id="CHEBI:140395"/>
        <dbReference type="EC" id="2.7.7.6"/>
    </reaction>
</comment>
<comment type="subunit">
    <text evidence="1">The RNAP catalytic core consists of 2 alpha, 1 beta, 1 beta' and 1 omega subunit. When a sigma factor is associated with the core the holoenzyme is formed, which can initiate transcription.</text>
</comment>
<comment type="similarity">
    <text evidence="1">Belongs to the RNA polymerase beta chain family.</text>
</comment>
<dbReference type="EC" id="2.7.7.6" evidence="1"/>
<dbReference type="EMBL" id="CP000716">
    <property type="protein sequence ID" value="ABR30369.1"/>
    <property type="molecule type" value="Genomic_DNA"/>
</dbReference>
<dbReference type="RefSeq" id="WP_012056730.1">
    <property type="nucleotide sequence ID" value="NC_009616.1"/>
</dbReference>
<dbReference type="SMR" id="A6LKB8"/>
<dbReference type="STRING" id="391009.Tmel_0502"/>
<dbReference type="KEGG" id="tme:Tmel_0502"/>
<dbReference type="eggNOG" id="COG0085">
    <property type="taxonomic scope" value="Bacteria"/>
</dbReference>
<dbReference type="HOGENOM" id="CLU_000524_4_3_0"/>
<dbReference type="OrthoDB" id="9803954at2"/>
<dbReference type="Proteomes" id="UP000001110">
    <property type="component" value="Chromosome"/>
</dbReference>
<dbReference type="GO" id="GO:0000428">
    <property type="term" value="C:DNA-directed RNA polymerase complex"/>
    <property type="evidence" value="ECO:0007669"/>
    <property type="project" value="UniProtKB-KW"/>
</dbReference>
<dbReference type="GO" id="GO:0003677">
    <property type="term" value="F:DNA binding"/>
    <property type="evidence" value="ECO:0007669"/>
    <property type="project" value="UniProtKB-UniRule"/>
</dbReference>
<dbReference type="GO" id="GO:0003899">
    <property type="term" value="F:DNA-directed RNA polymerase activity"/>
    <property type="evidence" value="ECO:0007669"/>
    <property type="project" value="UniProtKB-UniRule"/>
</dbReference>
<dbReference type="GO" id="GO:0032549">
    <property type="term" value="F:ribonucleoside binding"/>
    <property type="evidence" value="ECO:0007669"/>
    <property type="project" value="InterPro"/>
</dbReference>
<dbReference type="GO" id="GO:0006351">
    <property type="term" value="P:DNA-templated transcription"/>
    <property type="evidence" value="ECO:0007669"/>
    <property type="project" value="UniProtKB-UniRule"/>
</dbReference>
<dbReference type="CDD" id="cd00653">
    <property type="entry name" value="RNA_pol_B_RPB2"/>
    <property type="match status" value="1"/>
</dbReference>
<dbReference type="FunFam" id="3.90.1800.10:FF:000001">
    <property type="entry name" value="DNA-directed RNA polymerase subunit beta"/>
    <property type="match status" value="1"/>
</dbReference>
<dbReference type="Gene3D" id="2.40.50.100">
    <property type="match status" value="1"/>
</dbReference>
<dbReference type="Gene3D" id="2.40.50.150">
    <property type="match status" value="1"/>
</dbReference>
<dbReference type="Gene3D" id="3.90.1100.10">
    <property type="match status" value="2"/>
</dbReference>
<dbReference type="Gene3D" id="2.30.150.10">
    <property type="entry name" value="DNA-directed RNA polymerase, beta subunit, external 1 domain"/>
    <property type="match status" value="1"/>
</dbReference>
<dbReference type="Gene3D" id="2.40.270.10">
    <property type="entry name" value="DNA-directed RNA polymerase, subunit 2, domain 6"/>
    <property type="match status" value="2"/>
</dbReference>
<dbReference type="Gene3D" id="3.90.1800.10">
    <property type="entry name" value="RNA polymerase alpha subunit dimerisation domain"/>
    <property type="match status" value="1"/>
</dbReference>
<dbReference type="Gene3D" id="3.90.1110.10">
    <property type="entry name" value="RNA polymerase Rpb2, domain 2"/>
    <property type="match status" value="2"/>
</dbReference>
<dbReference type="HAMAP" id="MF_01321">
    <property type="entry name" value="RNApol_bact_RpoB"/>
    <property type="match status" value="1"/>
</dbReference>
<dbReference type="InterPro" id="IPR042107">
    <property type="entry name" value="DNA-dir_RNA_pol_bsu_ext_1_sf"/>
</dbReference>
<dbReference type="InterPro" id="IPR019462">
    <property type="entry name" value="DNA-dir_RNA_pol_bsu_external_1"/>
</dbReference>
<dbReference type="InterPro" id="IPR015712">
    <property type="entry name" value="DNA-dir_RNA_pol_su2"/>
</dbReference>
<dbReference type="InterPro" id="IPR007120">
    <property type="entry name" value="DNA-dir_RNAP_su2_dom"/>
</dbReference>
<dbReference type="InterPro" id="IPR037033">
    <property type="entry name" value="DNA-dir_RNAP_su2_hyb_sf"/>
</dbReference>
<dbReference type="InterPro" id="IPR010243">
    <property type="entry name" value="RNA_pol_bsu_bac"/>
</dbReference>
<dbReference type="InterPro" id="IPR007121">
    <property type="entry name" value="RNA_pol_bsu_CS"/>
</dbReference>
<dbReference type="InterPro" id="IPR007644">
    <property type="entry name" value="RNA_pol_bsu_protrusion"/>
</dbReference>
<dbReference type="InterPro" id="IPR007642">
    <property type="entry name" value="RNA_pol_Rpb2_2"/>
</dbReference>
<dbReference type="InterPro" id="IPR037034">
    <property type="entry name" value="RNA_pol_Rpb2_2_sf"/>
</dbReference>
<dbReference type="InterPro" id="IPR007645">
    <property type="entry name" value="RNA_pol_Rpb2_3"/>
</dbReference>
<dbReference type="InterPro" id="IPR007641">
    <property type="entry name" value="RNA_pol_Rpb2_7"/>
</dbReference>
<dbReference type="InterPro" id="IPR014724">
    <property type="entry name" value="RNA_pol_RPB2_OB-fold"/>
</dbReference>
<dbReference type="NCBIfam" id="NF001616">
    <property type="entry name" value="PRK00405.1"/>
    <property type="match status" value="1"/>
</dbReference>
<dbReference type="NCBIfam" id="TIGR02013">
    <property type="entry name" value="rpoB"/>
    <property type="match status" value="1"/>
</dbReference>
<dbReference type="PANTHER" id="PTHR20856">
    <property type="entry name" value="DNA-DIRECTED RNA POLYMERASE I SUBUNIT 2"/>
    <property type="match status" value="1"/>
</dbReference>
<dbReference type="Pfam" id="PF04563">
    <property type="entry name" value="RNA_pol_Rpb2_1"/>
    <property type="match status" value="1"/>
</dbReference>
<dbReference type="Pfam" id="PF04561">
    <property type="entry name" value="RNA_pol_Rpb2_2"/>
    <property type="match status" value="2"/>
</dbReference>
<dbReference type="Pfam" id="PF04565">
    <property type="entry name" value="RNA_pol_Rpb2_3"/>
    <property type="match status" value="1"/>
</dbReference>
<dbReference type="Pfam" id="PF10385">
    <property type="entry name" value="RNA_pol_Rpb2_45"/>
    <property type="match status" value="1"/>
</dbReference>
<dbReference type="Pfam" id="PF00562">
    <property type="entry name" value="RNA_pol_Rpb2_6"/>
    <property type="match status" value="1"/>
</dbReference>
<dbReference type="Pfam" id="PF04560">
    <property type="entry name" value="RNA_pol_Rpb2_7"/>
    <property type="match status" value="1"/>
</dbReference>
<dbReference type="SUPFAM" id="SSF64484">
    <property type="entry name" value="beta and beta-prime subunits of DNA dependent RNA-polymerase"/>
    <property type="match status" value="1"/>
</dbReference>
<dbReference type="PROSITE" id="PS01166">
    <property type="entry name" value="RNA_POL_BETA"/>
    <property type="match status" value="1"/>
</dbReference>
<name>RPOB_THEM4</name>